<keyword id="KW-0997">Cell inner membrane</keyword>
<keyword id="KW-1003">Cell membrane</keyword>
<keyword id="KW-0175">Coiled coil</keyword>
<keyword id="KW-0963">Cytoplasm</keyword>
<keyword id="KW-0472">Membrane</keyword>
<feature type="chain" id="PRO_1000132283" description="High frequency lysogenization protein HflD">
    <location>
        <begin position="1"/>
        <end position="213"/>
    </location>
</feature>
<feature type="coiled-coil region" evidence="1">
    <location>
        <begin position="99"/>
        <end position="126"/>
    </location>
</feature>
<evidence type="ECO:0000255" key="1">
    <source>
        <dbReference type="HAMAP-Rule" id="MF_00695"/>
    </source>
</evidence>
<protein>
    <recommendedName>
        <fullName evidence="1">High frequency lysogenization protein HflD</fullName>
    </recommendedName>
</protein>
<sequence>MAKNYYDITLALAGICQSARLVQQLAHQGHCDADALHVSLNSIIDMNPSSTLAVFGGSEANLRVGLETLLGVLNASSRQGLNAELTRYTLSLMVLKRKLSSAKGALDTLGNRINGLQRQLEHFDLQSETLMSAMAAIYVDVISPLGPRIQVTGSPAVLQSPQVQAKVRATLLAGIRAAVLWHQVGGGRLQLMFSRNRLTTQAKQILAHLTPEL</sequence>
<organism>
    <name type="scientific">Escherichia coli O157:H7 (strain EC4115 / EHEC)</name>
    <dbReference type="NCBI Taxonomy" id="444450"/>
    <lineage>
        <taxon>Bacteria</taxon>
        <taxon>Pseudomonadati</taxon>
        <taxon>Pseudomonadota</taxon>
        <taxon>Gammaproteobacteria</taxon>
        <taxon>Enterobacterales</taxon>
        <taxon>Enterobacteriaceae</taxon>
        <taxon>Escherichia</taxon>
    </lineage>
</organism>
<comment type="function">
    <text evidence="1">Negative regulator of phage lambda lysogenization. Contributes to the degradation of the phage regulatory protein CII. Acts probably by holding CII on the membrane surface, away from the target promoters, but close to the FtsH protease.</text>
</comment>
<comment type="subunit">
    <text evidence="1">Interacts with CII protein from phage lambda.</text>
</comment>
<comment type="subcellular location">
    <subcellularLocation>
        <location>Cytoplasm</location>
    </subcellularLocation>
    <subcellularLocation>
        <location evidence="1">Cell inner membrane</location>
        <topology evidence="1">Peripheral membrane protein</topology>
        <orientation evidence="1">Cytoplasmic side</orientation>
    </subcellularLocation>
</comment>
<comment type="similarity">
    <text evidence="1">Belongs to the HflD family.</text>
</comment>
<reference key="1">
    <citation type="journal article" date="2011" name="Proc. Natl. Acad. Sci. U.S.A.">
        <title>Genomic anatomy of Escherichia coli O157:H7 outbreaks.</title>
        <authorList>
            <person name="Eppinger M."/>
            <person name="Mammel M.K."/>
            <person name="Leclerc J.E."/>
            <person name="Ravel J."/>
            <person name="Cebula T.A."/>
        </authorList>
    </citation>
    <scope>NUCLEOTIDE SEQUENCE [LARGE SCALE GENOMIC DNA]</scope>
    <source>
        <strain>EC4115 / EHEC</strain>
    </source>
</reference>
<dbReference type="EMBL" id="CP001164">
    <property type="protein sequence ID" value="ACI37441.1"/>
    <property type="molecule type" value="Genomic_DNA"/>
</dbReference>
<dbReference type="RefSeq" id="WP_001301618.1">
    <property type="nucleotide sequence ID" value="NC_011353.1"/>
</dbReference>
<dbReference type="SMR" id="B5YWS7"/>
<dbReference type="KEGG" id="ecf:ECH74115_1593"/>
<dbReference type="HOGENOM" id="CLU_098920_0_0_6"/>
<dbReference type="GO" id="GO:0005737">
    <property type="term" value="C:cytoplasm"/>
    <property type="evidence" value="ECO:0007669"/>
    <property type="project" value="UniProtKB-SubCell"/>
</dbReference>
<dbReference type="GO" id="GO:0005886">
    <property type="term" value="C:plasma membrane"/>
    <property type="evidence" value="ECO:0007669"/>
    <property type="project" value="UniProtKB-SubCell"/>
</dbReference>
<dbReference type="FunFam" id="1.10.3890.10:FF:000001">
    <property type="entry name" value="High frequency lysogenization protein HflD homolog"/>
    <property type="match status" value="1"/>
</dbReference>
<dbReference type="Gene3D" id="1.10.3890.10">
    <property type="entry name" value="HflD-like"/>
    <property type="match status" value="1"/>
</dbReference>
<dbReference type="HAMAP" id="MF_00695">
    <property type="entry name" value="HflD_protein"/>
    <property type="match status" value="1"/>
</dbReference>
<dbReference type="InterPro" id="IPR007451">
    <property type="entry name" value="HflD"/>
</dbReference>
<dbReference type="InterPro" id="IPR035932">
    <property type="entry name" value="HflD-like_sf"/>
</dbReference>
<dbReference type="NCBIfam" id="NF001245">
    <property type="entry name" value="PRK00218.1-1"/>
    <property type="match status" value="1"/>
</dbReference>
<dbReference type="NCBIfam" id="NF001246">
    <property type="entry name" value="PRK00218.1-2"/>
    <property type="match status" value="1"/>
</dbReference>
<dbReference type="NCBIfam" id="NF001248">
    <property type="entry name" value="PRK00218.1-4"/>
    <property type="match status" value="1"/>
</dbReference>
<dbReference type="NCBIfam" id="NF001249">
    <property type="entry name" value="PRK00218.1-5"/>
    <property type="match status" value="1"/>
</dbReference>
<dbReference type="PANTHER" id="PTHR38100">
    <property type="entry name" value="HIGH FREQUENCY LYSOGENIZATION PROTEIN HFLD"/>
    <property type="match status" value="1"/>
</dbReference>
<dbReference type="PANTHER" id="PTHR38100:SF1">
    <property type="entry name" value="HIGH FREQUENCY LYSOGENIZATION PROTEIN HFLD"/>
    <property type="match status" value="1"/>
</dbReference>
<dbReference type="Pfam" id="PF04356">
    <property type="entry name" value="DUF489"/>
    <property type="match status" value="1"/>
</dbReference>
<dbReference type="SUPFAM" id="SSF101322">
    <property type="entry name" value="YcfC-like"/>
    <property type="match status" value="1"/>
</dbReference>
<gene>
    <name evidence="1" type="primary">hflD</name>
    <name type="ordered locus">ECH74115_1593</name>
</gene>
<accession>B5YWS7</accession>
<name>HFLD_ECO5E</name>
<proteinExistence type="inferred from homology"/>